<keyword id="KW-0963">Cytoplasm</keyword>
<keyword id="KW-0479">Metal-binding</keyword>
<keyword id="KW-0520">NAD</keyword>
<keyword id="KW-0560">Oxidoreductase</keyword>
<keyword id="KW-0862">Zinc</keyword>
<protein>
    <recommendedName>
        <fullName evidence="1">L-threonine 3-dehydrogenase</fullName>
        <shortName evidence="1">TDH</shortName>
        <ecNumber evidence="1">1.1.1.103</ecNumber>
    </recommendedName>
</protein>
<feature type="chain" id="PRO_1000147264" description="L-threonine 3-dehydrogenase">
    <location>
        <begin position="1"/>
        <end position="341"/>
    </location>
</feature>
<feature type="active site" description="Charge relay system" evidence="1">
    <location>
        <position position="40"/>
    </location>
</feature>
<feature type="active site" description="Charge relay system" evidence="1">
    <location>
        <position position="43"/>
    </location>
</feature>
<feature type="binding site" evidence="1">
    <location>
        <position position="38"/>
    </location>
    <ligand>
        <name>Zn(2+)</name>
        <dbReference type="ChEBI" id="CHEBI:29105"/>
        <label>1</label>
        <note>catalytic</note>
    </ligand>
</feature>
<feature type="binding site" evidence="1">
    <location>
        <position position="63"/>
    </location>
    <ligand>
        <name>Zn(2+)</name>
        <dbReference type="ChEBI" id="CHEBI:29105"/>
        <label>1</label>
        <note>catalytic</note>
    </ligand>
</feature>
<feature type="binding site" evidence="1">
    <location>
        <position position="64"/>
    </location>
    <ligand>
        <name>Zn(2+)</name>
        <dbReference type="ChEBI" id="CHEBI:29105"/>
        <label>1</label>
        <note>catalytic</note>
    </ligand>
</feature>
<feature type="binding site" evidence="1">
    <location>
        <position position="93"/>
    </location>
    <ligand>
        <name>Zn(2+)</name>
        <dbReference type="ChEBI" id="CHEBI:29105"/>
        <label>2</label>
    </ligand>
</feature>
<feature type="binding site" evidence="1">
    <location>
        <position position="96"/>
    </location>
    <ligand>
        <name>Zn(2+)</name>
        <dbReference type="ChEBI" id="CHEBI:29105"/>
        <label>2</label>
    </ligand>
</feature>
<feature type="binding site" evidence="1">
    <location>
        <position position="99"/>
    </location>
    <ligand>
        <name>Zn(2+)</name>
        <dbReference type="ChEBI" id="CHEBI:29105"/>
        <label>2</label>
    </ligand>
</feature>
<feature type="binding site" evidence="1">
    <location>
        <position position="107"/>
    </location>
    <ligand>
        <name>Zn(2+)</name>
        <dbReference type="ChEBI" id="CHEBI:29105"/>
        <label>2</label>
    </ligand>
</feature>
<feature type="binding site" evidence="1">
    <location>
        <position position="175"/>
    </location>
    <ligand>
        <name>NAD(+)</name>
        <dbReference type="ChEBI" id="CHEBI:57540"/>
    </ligand>
</feature>
<feature type="binding site" evidence="1">
    <location>
        <position position="195"/>
    </location>
    <ligand>
        <name>NAD(+)</name>
        <dbReference type="ChEBI" id="CHEBI:57540"/>
    </ligand>
</feature>
<feature type="binding site" evidence="1">
    <location>
        <position position="200"/>
    </location>
    <ligand>
        <name>NAD(+)</name>
        <dbReference type="ChEBI" id="CHEBI:57540"/>
    </ligand>
</feature>
<feature type="binding site" evidence="1">
    <location>
        <begin position="262"/>
        <end position="264"/>
    </location>
    <ligand>
        <name>NAD(+)</name>
        <dbReference type="ChEBI" id="CHEBI:57540"/>
    </ligand>
</feature>
<feature type="binding site" evidence="1">
    <location>
        <begin position="286"/>
        <end position="287"/>
    </location>
    <ligand>
        <name>NAD(+)</name>
        <dbReference type="ChEBI" id="CHEBI:57540"/>
    </ligand>
</feature>
<feature type="site" description="Important for catalytic activity for the proton relay mechanism but does not participate directly in the coordination of zinc atom" evidence="1">
    <location>
        <position position="148"/>
    </location>
</feature>
<comment type="function">
    <text evidence="1">Catalyzes the NAD(+)-dependent oxidation of L-threonine to 2-amino-3-ketobutyrate.</text>
</comment>
<comment type="catalytic activity">
    <reaction evidence="1">
        <text>L-threonine + NAD(+) = (2S)-2-amino-3-oxobutanoate + NADH + H(+)</text>
        <dbReference type="Rhea" id="RHEA:13161"/>
        <dbReference type="ChEBI" id="CHEBI:15378"/>
        <dbReference type="ChEBI" id="CHEBI:57540"/>
        <dbReference type="ChEBI" id="CHEBI:57926"/>
        <dbReference type="ChEBI" id="CHEBI:57945"/>
        <dbReference type="ChEBI" id="CHEBI:78948"/>
        <dbReference type="EC" id="1.1.1.103"/>
    </reaction>
</comment>
<comment type="cofactor">
    <cofactor evidence="1">
        <name>Zn(2+)</name>
        <dbReference type="ChEBI" id="CHEBI:29105"/>
    </cofactor>
    <text evidence="1">Binds 2 Zn(2+) ions per subunit.</text>
</comment>
<comment type="pathway">
    <text evidence="1">Amino-acid degradation; L-threonine degradation via oxydo-reductase pathway; glycine from L-threonine: step 1/2.</text>
</comment>
<comment type="subunit">
    <text evidence="1">Homotetramer.</text>
</comment>
<comment type="subcellular location">
    <subcellularLocation>
        <location evidence="1">Cytoplasm</location>
    </subcellularLocation>
</comment>
<comment type="similarity">
    <text evidence="1">Belongs to the zinc-containing alcohol dehydrogenase family.</text>
</comment>
<organism>
    <name type="scientific">Shewanella baltica (strain OS223)</name>
    <dbReference type="NCBI Taxonomy" id="407976"/>
    <lineage>
        <taxon>Bacteria</taxon>
        <taxon>Pseudomonadati</taxon>
        <taxon>Pseudomonadota</taxon>
        <taxon>Gammaproteobacteria</taxon>
        <taxon>Alteromonadales</taxon>
        <taxon>Shewanellaceae</taxon>
        <taxon>Shewanella</taxon>
    </lineage>
</organism>
<reference key="1">
    <citation type="submission" date="2008-12" db="EMBL/GenBank/DDBJ databases">
        <title>Complete sequence of chromosome of Shewanella baltica OS223.</title>
        <authorList>
            <consortium name="US DOE Joint Genome Institute"/>
            <person name="Lucas S."/>
            <person name="Copeland A."/>
            <person name="Lapidus A."/>
            <person name="Glavina del Rio T."/>
            <person name="Dalin E."/>
            <person name="Tice H."/>
            <person name="Bruce D."/>
            <person name="Goodwin L."/>
            <person name="Pitluck S."/>
            <person name="Chertkov O."/>
            <person name="Meincke L."/>
            <person name="Brettin T."/>
            <person name="Detter J.C."/>
            <person name="Han C."/>
            <person name="Kuske C.R."/>
            <person name="Larimer F."/>
            <person name="Land M."/>
            <person name="Hauser L."/>
            <person name="Kyrpides N."/>
            <person name="Ovchinnikova G."/>
            <person name="Brettar I."/>
            <person name="Rodrigues J."/>
            <person name="Konstantinidis K."/>
            <person name="Tiedje J."/>
        </authorList>
    </citation>
    <scope>NUCLEOTIDE SEQUENCE [LARGE SCALE GENOMIC DNA]</scope>
    <source>
        <strain>OS223</strain>
    </source>
</reference>
<gene>
    <name evidence="1" type="primary">tdh</name>
    <name type="ordered locus">Sbal223_4286</name>
</gene>
<dbReference type="EC" id="1.1.1.103" evidence="1"/>
<dbReference type="EMBL" id="CP001252">
    <property type="protein sequence ID" value="ACK48752.1"/>
    <property type="molecule type" value="Genomic_DNA"/>
</dbReference>
<dbReference type="RefSeq" id="WP_006079369.1">
    <property type="nucleotide sequence ID" value="NC_011663.1"/>
</dbReference>
<dbReference type="SMR" id="B8EDS6"/>
<dbReference type="GeneID" id="11775065"/>
<dbReference type="KEGG" id="sbp:Sbal223_4286"/>
<dbReference type="HOGENOM" id="CLU_026673_11_0_6"/>
<dbReference type="UniPathway" id="UPA00046">
    <property type="reaction ID" value="UER00505"/>
</dbReference>
<dbReference type="Proteomes" id="UP000002507">
    <property type="component" value="Chromosome"/>
</dbReference>
<dbReference type="GO" id="GO:0005737">
    <property type="term" value="C:cytoplasm"/>
    <property type="evidence" value="ECO:0007669"/>
    <property type="project" value="UniProtKB-SubCell"/>
</dbReference>
<dbReference type="GO" id="GO:0008743">
    <property type="term" value="F:L-threonine 3-dehydrogenase activity"/>
    <property type="evidence" value="ECO:0007669"/>
    <property type="project" value="UniProtKB-UniRule"/>
</dbReference>
<dbReference type="GO" id="GO:0008270">
    <property type="term" value="F:zinc ion binding"/>
    <property type="evidence" value="ECO:0007669"/>
    <property type="project" value="UniProtKB-UniRule"/>
</dbReference>
<dbReference type="GO" id="GO:0019518">
    <property type="term" value="P:L-threonine catabolic process to glycine"/>
    <property type="evidence" value="ECO:0007669"/>
    <property type="project" value="UniProtKB-UniPathway"/>
</dbReference>
<dbReference type="Gene3D" id="3.90.180.10">
    <property type="entry name" value="Medium-chain alcohol dehydrogenases, catalytic domain"/>
    <property type="match status" value="1"/>
</dbReference>
<dbReference type="Gene3D" id="3.40.50.720">
    <property type="entry name" value="NAD(P)-binding Rossmann-like Domain"/>
    <property type="match status" value="1"/>
</dbReference>
<dbReference type="HAMAP" id="MF_00627">
    <property type="entry name" value="Thr_dehydrog"/>
    <property type="match status" value="1"/>
</dbReference>
<dbReference type="InterPro" id="IPR013149">
    <property type="entry name" value="ADH-like_C"/>
</dbReference>
<dbReference type="InterPro" id="IPR013154">
    <property type="entry name" value="ADH-like_N"/>
</dbReference>
<dbReference type="InterPro" id="IPR002328">
    <property type="entry name" value="ADH_Zn_CS"/>
</dbReference>
<dbReference type="InterPro" id="IPR011032">
    <property type="entry name" value="GroES-like_sf"/>
</dbReference>
<dbReference type="InterPro" id="IPR004627">
    <property type="entry name" value="L-Threonine_3-DHase"/>
</dbReference>
<dbReference type="InterPro" id="IPR036291">
    <property type="entry name" value="NAD(P)-bd_dom_sf"/>
</dbReference>
<dbReference type="InterPro" id="IPR020843">
    <property type="entry name" value="PKS_ER"/>
</dbReference>
<dbReference type="InterPro" id="IPR050129">
    <property type="entry name" value="Zn_alcohol_dh"/>
</dbReference>
<dbReference type="NCBIfam" id="NF003808">
    <property type="entry name" value="PRK05396.1"/>
    <property type="match status" value="1"/>
</dbReference>
<dbReference type="NCBIfam" id="TIGR00692">
    <property type="entry name" value="tdh"/>
    <property type="match status" value="1"/>
</dbReference>
<dbReference type="PANTHER" id="PTHR43401">
    <property type="entry name" value="L-THREONINE 3-DEHYDROGENASE"/>
    <property type="match status" value="1"/>
</dbReference>
<dbReference type="PANTHER" id="PTHR43401:SF2">
    <property type="entry name" value="L-THREONINE 3-DEHYDROGENASE"/>
    <property type="match status" value="1"/>
</dbReference>
<dbReference type="Pfam" id="PF08240">
    <property type="entry name" value="ADH_N"/>
    <property type="match status" value="1"/>
</dbReference>
<dbReference type="Pfam" id="PF00107">
    <property type="entry name" value="ADH_zinc_N"/>
    <property type="match status" value="1"/>
</dbReference>
<dbReference type="SMART" id="SM00829">
    <property type="entry name" value="PKS_ER"/>
    <property type="match status" value="1"/>
</dbReference>
<dbReference type="SUPFAM" id="SSF50129">
    <property type="entry name" value="GroES-like"/>
    <property type="match status" value="1"/>
</dbReference>
<dbReference type="SUPFAM" id="SSF51735">
    <property type="entry name" value="NAD(P)-binding Rossmann-fold domains"/>
    <property type="match status" value="1"/>
</dbReference>
<dbReference type="PROSITE" id="PS00059">
    <property type="entry name" value="ADH_ZINC"/>
    <property type="match status" value="1"/>
</dbReference>
<accession>B8EDS6</accession>
<evidence type="ECO:0000255" key="1">
    <source>
        <dbReference type="HAMAP-Rule" id="MF_00627"/>
    </source>
</evidence>
<proteinExistence type="inferred from homology"/>
<sequence length="341" mass="37179">MKALSKLKAEKGIWLVDAPKPVMGHNDLLIKIKKTAICGTDMHIYNWDEWSQKTIPVPMVVGHEYVGEVVDIGQEVRGFKIGDRVSGEGHITCGHCRNCRAGRTHLCRNTSGVGVNREGSFAEYLVIPAFNAFKIPDDISDDLASIFDPFGNAVHTALSFDLVGEDVLITGAGPIGIMAAAVCRHVGARHVVITDVNEYRLELARKMGATRAVNVSKESLKDVMKELGMTEGFDVGLEMSGVPSAFHAMLDTMNHGGKVAMLGIPGGEMAIDWSKVIFKGLVIKGIYGREMFETWYKMASLIQSGLDISPIITHHFKIDDFQQGFDAMGSGQSGKVILSWD</sequence>
<name>TDH_SHEB2</name>